<evidence type="ECO:0000250" key="1"/>
<evidence type="ECO:0000255" key="2"/>
<evidence type="ECO:0000305" key="3"/>
<feature type="chain" id="PRO_0000287592" description="Regulator of G-protein signaling 9-binding protein C">
    <location>
        <begin position="1"/>
        <end position="251"/>
    </location>
</feature>
<feature type="topological domain" description="Cytoplasmic" evidence="2">
    <location>
        <begin position="1"/>
        <end position="230"/>
    </location>
</feature>
<feature type="transmembrane region" description="Helical; Anchor for type IV membrane protein" evidence="2">
    <location>
        <begin position="231"/>
        <end position="250"/>
    </location>
</feature>
<feature type="topological domain" description="Extracellular" evidence="2">
    <location>
        <position position="251"/>
    </location>
</feature>
<feature type="coiled-coil region" evidence="2">
    <location>
        <begin position="53"/>
        <end position="94"/>
    </location>
</feature>
<feature type="coiled-coil region" evidence="2">
    <location>
        <begin position="158"/>
        <end position="187"/>
    </location>
</feature>
<proteinExistence type="evidence at transcript level"/>
<sequence length="251" mass="27998">MPLQNVKVADEGTVNFQKVKEECITAVESLHKVVACYRHLVLTIGGSSDSIHLRDELRRTRERAQELAVCNRNKLTTALRDKKLSKKDCEELERLWVEFSSCLELFHNDMCKVYELATALPHSSTNQPAIQTGSTGNTSAIASRALNVQNINYSDSPANKASLEYQEIEEEILKVDNMITDMEMKVNVLRWTVEANTRMNDELKSTHDSSSVVLLSEEESNSKGCCSDGQLIVSLLLCGTALVAITLYSIL</sequence>
<gene>
    <name type="primary">rgs9bp-c</name>
</gene>
<reference key="1">
    <citation type="submission" date="2004-06" db="EMBL/GenBank/DDBJ databases">
        <authorList>
            <consortium name="NIH - Xenopus Gene Collection (XGC) project"/>
        </authorList>
    </citation>
    <scope>NUCLEOTIDE SEQUENCE [LARGE SCALE MRNA]</scope>
    <source>
        <tissue>Brain</tissue>
    </source>
</reference>
<name>R9BPC_XENLA</name>
<comment type="function">
    <text>Regulator of G protein-coupled receptor (GPCR) signaling. Probably acts by regulating the activity of some 'R7' family protein (RGS6, RGS7, RGS9 and/or RGS11).</text>
</comment>
<comment type="subcellular location">
    <subcellularLocation>
        <location evidence="1">Membrane</location>
        <topology evidence="1">Single-pass type IV membrane protein</topology>
    </subcellularLocation>
</comment>
<comment type="similarity">
    <text evidence="3">Belongs to the RGS7BP/RGS9BP family.</text>
</comment>
<dbReference type="EMBL" id="BC074363">
    <property type="protein sequence ID" value="AAH74363.1"/>
    <property type="molecule type" value="mRNA"/>
</dbReference>
<dbReference type="RefSeq" id="NP_001086237.1">
    <property type="nucleotide sequence ID" value="NM_001092768.1"/>
</dbReference>
<dbReference type="SMR" id="Q6GLU0"/>
<dbReference type="DNASU" id="444666"/>
<dbReference type="GeneID" id="444666"/>
<dbReference type="KEGG" id="xla:444666"/>
<dbReference type="CTD" id="444666"/>
<dbReference type="OrthoDB" id="6358515at2759"/>
<dbReference type="Proteomes" id="UP000186698">
    <property type="component" value="Chromosome 6S"/>
</dbReference>
<dbReference type="Bgee" id="444666">
    <property type="expression patterns" value="Expressed in camera-type eye and 1 other cell type or tissue"/>
</dbReference>
<dbReference type="GO" id="GO:0016020">
    <property type="term" value="C:membrane"/>
    <property type="evidence" value="ECO:0007669"/>
    <property type="project" value="UniProtKB-SubCell"/>
</dbReference>
<dbReference type="GO" id="GO:0043005">
    <property type="term" value="C:neuron projection"/>
    <property type="evidence" value="ECO:0000318"/>
    <property type="project" value="GO_Central"/>
</dbReference>
<dbReference type="GO" id="GO:0007186">
    <property type="term" value="P:G protein-coupled receptor signaling pathway"/>
    <property type="evidence" value="ECO:0000318"/>
    <property type="project" value="GO_Central"/>
</dbReference>
<dbReference type="GO" id="GO:0009968">
    <property type="term" value="P:negative regulation of signal transduction"/>
    <property type="evidence" value="ECO:0007669"/>
    <property type="project" value="UniProtKB-KW"/>
</dbReference>
<dbReference type="InterPro" id="IPR026512">
    <property type="entry name" value="RGS7BP/RGS9BP"/>
</dbReference>
<dbReference type="PANTHER" id="PTHR21029">
    <property type="entry name" value="R-SEVEN BINDING PROTEIN (R7BP) HOMOLOG"/>
    <property type="match status" value="1"/>
</dbReference>
<accession>Q6GLU0</accession>
<keyword id="KW-0175">Coiled coil</keyword>
<keyword id="KW-0472">Membrane</keyword>
<keyword id="KW-1185">Reference proteome</keyword>
<keyword id="KW-0734">Signal transduction inhibitor</keyword>
<keyword id="KW-0812">Transmembrane</keyword>
<keyword id="KW-1133">Transmembrane helix</keyword>
<protein>
    <recommendedName>
        <fullName>Regulator of G-protein signaling 9-binding protein C</fullName>
    </recommendedName>
    <alternativeName>
        <fullName>RGS9-anchoring protein C</fullName>
    </alternativeName>
</protein>
<organism>
    <name type="scientific">Xenopus laevis</name>
    <name type="common">African clawed frog</name>
    <dbReference type="NCBI Taxonomy" id="8355"/>
    <lineage>
        <taxon>Eukaryota</taxon>
        <taxon>Metazoa</taxon>
        <taxon>Chordata</taxon>
        <taxon>Craniata</taxon>
        <taxon>Vertebrata</taxon>
        <taxon>Euteleostomi</taxon>
        <taxon>Amphibia</taxon>
        <taxon>Batrachia</taxon>
        <taxon>Anura</taxon>
        <taxon>Pipoidea</taxon>
        <taxon>Pipidae</taxon>
        <taxon>Xenopodinae</taxon>
        <taxon>Xenopus</taxon>
        <taxon>Xenopus</taxon>
    </lineage>
</organism>